<gene>
    <name type="primary">tif32</name>
    <name type="ORF">ACLA_029440</name>
</gene>
<accession>A1CRE5</accession>
<dbReference type="EMBL" id="DS027059">
    <property type="protein sequence ID" value="EAW08216.1"/>
    <property type="molecule type" value="Genomic_DNA"/>
</dbReference>
<dbReference type="RefSeq" id="XP_001269642.1">
    <property type="nucleotide sequence ID" value="XM_001269641.1"/>
</dbReference>
<dbReference type="SMR" id="A1CRE5"/>
<dbReference type="STRING" id="344612.A1CRE5"/>
<dbReference type="EnsemblFungi" id="EAW08216">
    <property type="protein sequence ID" value="EAW08216"/>
    <property type="gene ID" value="ACLA_029440"/>
</dbReference>
<dbReference type="GeneID" id="4700907"/>
<dbReference type="KEGG" id="act:ACLA_029440"/>
<dbReference type="VEuPathDB" id="FungiDB:ACLA_029440"/>
<dbReference type="eggNOG" id="KOG2072">
    <property type="taxonomic scope" value="Eukaryota"/>
</dbReference>
<dbReference type="HOGENOM" id="CLU_002096_2_1_1"/>
<dbReference type="OMA" id="EHITNKR"/>
<dbReference type="OrthoDB" id="18884at2759"/>
<dbReference type="Proteomes" id="UP000006701">
    <property type="component" value="Unassembled WGS sequence"/>
</dbReference>
<dbReference type="GO" id="GO:0010494">
    <property type="term" value="C:cytoplasmic stress granule"/>
    <property type="evidence" value="ECO:0007669"/>
    <property type="project" value="EnsemblFungi"/>
</dbReference>
<dbReference type="GO" id="GO:0016282">
    <property type="term" value="C:eukaryotic 43S preinitiation complex"/>
    <property type="evidence" value="ECO:0007669"/>
    <property type="project" value="UniProtKB-UniRule"/>
</dbReference>
<dbReference type="GO" id="GO:0033290">
    <property type="term" value="C:eukaryotic 48S preinitiation complex"/>
    <property type="evidence" value="ECO:0007669"/>
    <property type="project" value="UniProtKB-UniRule"/>
</dbReference>
<dbReference type="GO" id="GO:0071540">
    <property type="term" value="C:eukaryotic translation initiation factor 3 complex, eIF3e"/>
    <property type="evidence" value="ECO:0007669"/>
    <property type="project" value="EnsemblFungi"/>
</dbReference>
<dbReference type="GO" id="GO:0071541">
    <property type="term" value="C:eukaryotic translation initiation factor 3 complex, eIF3m"/>
    <property type="evidence" value="ECO:0007669"/>
    <property type="project" value="EnsemblFungi"/>
</dbReference>
<dbReference type="GO" id="GO:0043614">
    <property type="term" value="C:multi-eIF complex"/>
    <property type="evidence" value="ECO:0007669"/>
    <property type="project" value="TreeGrafter"/>
</dbReference>
<dbReference type="GO" id="GO:0003729">
    <property type="term" value="F:mRNA binding"/>
    <property type="evidence" value="ECO:0007669"/>
    <property type="project" value="TreeGrafter"/>
</dbReference>
<dbReference type="GO" id="GO:0003743">
    <property type="term" value="F:translation initiation factor activity"/>
    <property type="evidence" value="ECO:0007669"/>
    <property type="project" value="UniProtKB-UniRule"/>
</dbReference>
<dbReference type="GO" id="GO:0001732">
    <property type="term" value="P:formation of cytoplasmic translation initiation complex"/>
    <property type="evidence" value="ECO:0007669"/>
    <property type="project" value="UniProtKB-UniRule"/>
</dbReference>
<dbReference type="GO" id="GO:0002188">
    <property type="term" value="P:translation reinitiation"/>
    <property type="evidence" value="ECO:0007669"/>
    <property type="project" value="TreeGrafter"/>
</dbReference>
<dbReference type="FunFam" id="1.25.40.860:FF:000003">
    <property type="entry name" value="Eukaryotic translation initiation factor 3 subunit A"/>
    <property type="match status" value="1"/>
</dbReference>
<dbReference type="FunFam" id="1.25.40.860:FF:000005">
    <property type="entry name" value="Eukaryotic translation initiation factor 3 subunit A"/>
    <property type="match status" value="1"/>
</dbReference>
<dbReference type="FunFam" id="4.10.860.10:FF:000001">
    <property type="entry name" value="Eukaryotic translation initiation factor 3 subunit A"/>
    <property type="match status" value="1"/>
</dbReference>
<dbReference type="Gene3D" id="1.25.40.860">
    <property type="match status" value="2"/>
</dbReference>
<dbReference type="Gene3D" id="4.10.860.10">
    <property type="entry name" value="UVR domain"/>
    <property type="match status" value="1"/>
</dbReference>
<dbReference type="HAMAP" id="MF_03000">
    <property type="entry name" value="eIF3a"/>
    <property type="match status" value="1"/>
</dbReference>
<dbReference type="InterPro" id="IPR027512">
    <property type="entry name" value="EIF3A"/>
</dbReference>
<dbReference type="InterPro" id="IPR054711">
    <property type="entry name" value="eIF3a_PCI_TPR-like"/>
</dbReference>
<dbReference type="InterPro" id="IPR000717">
    <property type="entry name" value="PCI_dom"/>
</dbReference>
<dbReference type="PANTHER" id="PTHR14005:SF0">
    <property type="entry name" value="EUKARYOTIC TRANSLATION INITIATION FACTOR 3 SUBUNIT A"/>
    <property type="match status" value="1"/>
</dbReference>
<dbReference type="PANTHER" id="PTHR14005">
    <property type="entry name" value="EUKARYOTIC TRANSLATION INITIATION FACTOR 3, THETA SUBUNIT"/>
    <property type="match status" value="1"/>
</dbReference>
<dbReference type="Pfam" id="PF22591">
    <property type="entry name" value="eIF3a_PCI_TPR-like"/>
    <property type="match status" value="1"/>
</dbReference>
<dbReference type="Pfam" id="PF01399">
    <property type="entry name" value="PCI"/>
    <property type="match status" value="1"/>
</dbReference>
<dbReference type="SMART" id="SM00088">
    <property type="entry name" value="PINT"/>
    <property type="match status" value="1"/>
</dbReference>
<dbReference type="PROSITE" id="PS50250">
    <property type="entry name" value="PCI"/>
    <property type="match status" value="1"/>
</dbReference>
<organism>
    <name type="scientific">Aspergillus clavatus (strain ATCC 1007 / CBS 513.65 / DSM 816 / NCTC 3887 / NRRL 1 / QM 1276 / 107)</name>
    <dbReference type="NCBI Taxonomy" id="344612"/>
    <lineage>
        <taxon>Eukaryota</taxon>
        <taxon>Fungi</taxon>
        <taxon>Dikarya</taxon>
        <taxon>Ascomycota</taxon>
        <taxon>Pezizomycotina</taxon>
        <taxon>Eurotiomycetes</taxon>
        <taxon>Eurotiomycetidae</taxon>
        <taxon>Eurotiales</taxon>
        <taxon>Aspergillaceae</taxon>
        <taxon>Aspergillus</taxon>
        <taxon>Aspergillus subgen. Fumigati</taxon>
    </lineage>
</organism>
<evidence type="ECO:0000255" key="1">
    <source>
        <dbReference type="HAMAP-Rule" id="MF_03000"/>
    </source>
</evidence>
<evidence type="ECO:0000255" key="2">
    <source>
        <dbReference type="PROSITE-ProRule" id="PRU01185"/>
    </source>
</evidence>
<evidence type="ECO:0000256" key="3">
    <source>
        <dbReference type="SAM" id="MobiDB-lite"/>
    </source>
</evidence>
<reference key="1">
    <citation type="journal article" date="2008" name="PLoS Genet.">
        <title>Genomic islands in the pathogenic filamentous fungus Aspergillus fumigatus.</title>
        <authorList>
            <person name="Fedorova N.D."/>
            <person name="Khaldi N."/>
            <person name="Joardar V.S."/>
            <person name="Maiti R."/>
            <person name="Amedeo P."/>
            <person name="Anderson M.J."/>
            <person name="Crabtree J."/>
            <person name="Silva J.C."/>
            <person name="Badger J.H."/>
            <person name="Albarraq A."/>
            <person name="Angiuoli S."/>
            <person name="Bussey H."/>
            <person name="Bowyer P."/>
            <person name="Cotty P.J."/>
            <person name="Dyer P.S."/>
            <person name="Egan A."/>
            <person name="Galens K."/>
            <person name="Fraser-Liggett C.M."/>
            <person name="Haas B.J."/>
            <person name="Inman J.M."/>
            <person name="Kent R."/>
            <person name="Lemieux S."/>
            <person name="Malavazi I."/>
            <person name="Orvis J."/>
            <person name="Roemer T."/>
            <person name="Ronning C.M."/>
            <person name="Sundaram J.P."/>
            <person name="Sutton G."/>
            <person name="Turner G."/>
            <person name="Venter J.C."/>
            <person name="White O.R."/>
            <person name="Whitty B.R."/>
            <person name="Youngman P."/>
            <person name="Wolfe K.H."/>
            <person name="Goldman G.H."/>
            <person name="Wortman J.R."/>
            <person name="Jiang B."/>
            <person name="Denning D.W."/>
            <person name="Nierman W.C."/>
        </authorList>
    </citation>
    <scope>NUCLEOTIDE SEQUENCE [LARGE SCALE GENOMIC DNA]</scope>
    <source>
        <strain>ATCC 1007 / CBS 513.65 / DSM 816 / NCTC 3887 / NRRL 1 / QM 1276 / 107</strain>
    </source>
</reference>
<name>EIF3A_ASPCL</name>
<proteinExistence type="inferred from homology"/>
<keyword id="KW-0175">Coiled coil</keyword>
<keyword id="KW-0963">Cytoplasm</keyword>
<keyword id="KW-0396">Initiation factor</keyword>
<keyword id="KW-0648">Protein biosynthesis</keyword>
<keyword id="KW-1185">Reference proteome</keyword>
<keyword id="KW-0694">RNA-binding</keyword>
<protein>
    <recommendedName>
        <fullName evidence="1">Eukaryotic translation initiation factor 3 subunit A</fullName>
        <shortName evidence="1">eIF3a</shortName>
    </recommendedName>
    <alternativeName>
        <fullName evidence="1">Eukaryotic translation initiation factor 3 110 kDa subunit homolog</fullName>
        <shortName evidence="1">eIF3 p110</shortName>
    </alternativeName>
    <alternativeName>
        <fullName evidence="1">Translation initiation factor eIF3, p110 subunit homolog</fullName>
    </alternativeName>
</protein>
<comment type="function">
    <text evidence="1">RNA-binding component of the eukaryotic translation initiation factor 3 (eIF-3) complex, which is involved in protein synthesis of a specialized repertoire of mRNAs and, together with other initiation factors, stimulates binding of mRNA and methionyl-tRNAi to the 40S ribosome. The eIF-3 complex specifically targets and initiates translation of a subset of mRNAs involved in cell proliferation.</text>
</comment>
<comment type="subunit">
    <text evidence="1">Component of the eukaryotic translation initiation factor 3 (eIF-3) complex.</text>
</comment>
<comment type="subcellular location">
    <subcellularLocation>
        <location evidence="1">Cytoplasm</location>
    </subcellularLocation>
</comment>
<comment type="similarity">
    <text evidence="1">Belongs to the eIF-3 subunit A family.</text>
</comment>
<feature type="chain" id="PRO_0000366350" description="Eukaryotic translation initiation factor 3 subunit A">
    <location>
        <begin position="1"/>
        <end position="1044"/>
    </location>
</feature>
<feature type="domain" description="PCI" evidence="2">
    <location>
        <begin position="339"/>
        <end position="523"/>
    </location>
</feature>
<feature type="region of interest" description="Disordered" evidence="3">
    <location>
        <begin position="797"/>
        <end position="1044"/>
    </location>
</feature>
<feature type="coiled-coil region" evidence="1">
    <location>
        <begin position="92"/>
        <end position="121"/>
    </location>
</feature>
<feature type="coiled-coil region" evidence="1">
    <location>
        <begin position="611"/>
        <end position="907"/>
    </location>
</feature>
<feature type="compositionally biased region" description="Basic and acidic residues" evidence="3">
    <location>
        <begin position="797"/>
        <end position="901"/>
    </location>
</feature>
<feature type="compositionally biased region" description="Low complexity" evidence="3">
    <location>
        <begin position="943"/>
        <end position="956"/>
    </location>
</feature>
<feature type="compositionally biased region" description="Low complexity" evidence="3">
    <location>
        <begin position="1006"/>
        <end position="1017"/>
    </location>
</feature>
<sequence>MPPPPHIKPENVLKRAQELIAVGQAPAALNVLHEHVTSKRTRSTPIVSLEPVMLLFVELCVDLRKGKAAKDGLYQYKNIAQNTNVGTIEVVLKKFIELAEKKVTEAQAKADEIQSSLESAAPSSNVEDLEAIETPETILLATVSGEQSRDRTDRAVVTPWLKFLWETYRTVLEILKNNARLEVMYQTTALQAFQFCLKYTRKTEFRRLCELLRNHVQNAAKYSAQMHAINLSDPDTLQRHLDTRFQQLNVAVELELWQEAFRSIEDIHTLLSLSKRPAKNVMMANYYEKLARIFLVSENYLFHAAAWNRYYNLLRQSAAALAAGQGTKKENPSVTDADMTKAASFVLLSALSIPVISTSRSRGALVDVDEVRKNKNTRLTNLLGMAQAPSRAVLFRDALNKGLLKRARPEIRDLYNILEVDFHPLSICKKITPILKQIGADPEMEKYVLPLQQVILTRLFQQLSQVYESVELKFIYELAQFPEPFQVTPAMIEKFIMNGCKKGDLAIRVDHISGVLTFDTDIFSSAKALHPGSAAGSAESEAGSVQRLQNTPAEIARLQLTRLAKTLHVTCMYVDPSYSEVRIQAKQAAQARAAAGVAKEHEETLARRVIIDKKKEAATDALQRKQREEETRKRIRTQQLQEAEKQRLLDEQREREKKRIKDEQDRIRQQELKKQLEELKSGVKGIDISELDLEDLDANRLRAIKLAQLEKEKNELNDKIRTTAKRIDHLERAFRREELKHIAEDYEAQKQHDMEVYEATKAETLKEAKEKHAEAVALKHRLSRLVPVYSNFRKEVSEKRHEEFEKRRKAAERDFEAKKKQRIREVQERRRRERAEREAEEQRQKEEEERARREEEERVAREEERRRVLTEEKAKREEERKKLDEIALKQKQREEEAEARRAARKAGVTEPPPRAAEPERTAPRLNIAPRTGGSSWRERQAAKEAAGGAAPAAAPAPEAPKEEAQPPRRTGGGYVPPHLRSGAGASAAPAAPPATEKYVPRHMRDSSSSQPPSRTQTPPAPAAEKPEGSGAPQKWVPRWKQQQS</sequence>